<gene>
    <name evidence="3" type="primary">mina-1</name>
    <name evidence="6" type="ORF">C41G7.3</name>
</gene>
<feature type="chain" id="PRO_0000448350" description="Messenger RNA-binding inhibitor of apoptosis 1">
    <location>
        <begin position="1"/>
        <end position="393"/>
    </location>
</feature>
<feature type="region of interest" description="KH 1-like" evidence="4">
    <location>
        <begin position="12"/>
        <end position="76"/>
    </location>
</feature>
<feature type="region of interest" description="KH 2-like" evidence="4">
    <location>
        <begin position="79"/>
        <end position="157"/>
    </location>
</feature>
<feature type="region of interest" description="KH 3-like" evidence="2 7">
    <location>
        <begin position="259"/>
        <end position="322"/>
    </location>
</feature>
<feature type="region of interest" description="Disordered" evidence="1">
    <location>
        <begin position="328"/>
        <end position="393"/>
    </location>
</feature>
<feature type="compositionally biased region" description="Low complexity" evidence="1">
    <location>
        <begin position="345"/>
        <end position="359"/>
    </location>
</feature>
<feature type="mutagenesis site" description="Impairs RNA-binding." evidence="2">
    <original>NR</original>
    <variation>DD</variation>
    <location>
        <begin position="276"/>
        <end position="277"/>
    </location>
</feature>
<feature type="strand" evidence="8">
    <location>
        <begin position="259"/>
        <end position="265"/>
    </location>
</feature>
<feature type="helix" evidence="8">
    <location>
        <begin position="267"/>
        <end position="270"/>
    </location>
</feature>
<feature type="helix" evidence="8">
    <location>
        <begin position="271"/>
        <end position="274"/>
    </location>
</feature>
<feature type="helix" evidence="8">
    <location>
        <begin position="279"/>
        <end position="288"/>
    </location>
</feature>
<feature type="strand" evidence="8">
    <location>
        <begin position="291"/>
        <end position="294"/>
    </location>
</feature>
<feature type="strand" evidence="8">
    <location>
        <begin position="305"/>
        <end position="313"/>
    </location>
</feature>
<feature type="helix" evidence="8">
    <location>
        <begin position="314"/>
        <end position="321"/>
    </location>
</feature>
<feature type="turn" evidence="8">
    <location>
        <begin position="322"/>
        <end position="330"/>
    </location>
</feature>
<feature type="helix" evidence="8">
    <location>
        <begin position="331"/>
        <end position="333"/>
    </location>
</feature>
<organism evidence="5">
    <name type="scientific">Caenorhabditis elegans</name>
    <dbReference type="NCBI Taxonomy" id="6239"/>
    <lineage>
        <taxon>Eukaryota</taxon>
        <taxon>Metazoa</taxon>
        <taxon>Ecdysozoa</taxon>
        <taxon>Nematoda</taxon>
        <taxon>Chromadorea</taxon>
        <taxon>Rhabditida</taxon>
        <taxon>Rhabditina</taxon>
        <taxon>Rhabditomorpha</taxon>
        <taxon>Rhabditoidea</taxon>
        <taxon>Rhabditidae</taxon>
        <taxon>Peloderinae</taxon>
        <taxon>Caenorhabditis</taxon>
    </lineage>
</organism>
<proteinExistence type="evidence at protein level"/>
<evidence type="ECO:0000256" key="1">
    <source>
        <dbReference type="SAM" id="MobiDB-lite"/>
    </source>
</evidence>
<evidence type="ECO:0000269" key="2">
    <source>
    </source>
</evidence>
<evidence type="ECO:0000303" key="3">
    <source>
    </source>
</evidence>
<evidence type="ECO:0000305" key="4">
    <source>
    </source>
</evidence>
<evidence type="ECO:0000312" key="5">
    <source>
        <dbReference type="Proteomes" id="UP000001940"/>
    </source>
</evidence>
<evidence type="ECO:0000312" key="6">
    <source>
        <dbReference type="WormBase" id="C41G7.3"/>
    </source>
</evidence>
<evidence type="ECO:0007744" key="7">
    <source>
        <dbReference type="PDB" id="6FBL"/>
    </source>
</evidence>
<evidence type="ECO:0007829" key="8">
    <source>
        <dbReference type="PDB" id="6FBL"/>
    </source>
</evidence>
<reference evidence="5" key="1">
    <citation type="journal article" date="1998" name="Science">
        <title>Genome sequence of the nematode C. elegans: a platform for investigating biology.</title>
        <authorList>
            <consortium name="The C. elegans sequencing consortium"/>
        </authorList>
    </citation>
    <scope>NUCLEOTIDE SEQUENCE [LARGE SCALE GENOMIC DNA]</scope>
    <source>
        <strain evidence="5">Bristol N2</strain>
    </source>
</reference>
<reference evidence="7" key="2">
    <citation type="journal article" date="2019" name="Cell Death Differ.">
        <title>MINA-1 and WAGO-4 are part of regulatory network coordinating germ cell death and RNAi in C. elegans.</title>
        <authorList>
            <person name="Sendoel A."/>
            <person name="Subasic D."/>
            <person name="Ducoli L."/>
            <person name="Keller M."/>
            <person name="Michel E."/>
            <person name="Kohler I."/>
            <person name="Singh K.D."/>
            <person name="Zheng X."/>
            <person name="Bruemmer A."/>
            <person name="Imig J."/>
            <person name="Kishore S."/>
            <person name="Wu Y."/>
            <person name="Kanitz A."/>
            <person name="Kaech A."/>
            <person name="Mittal N."/>
            <person name="Matia-Gonzalez A.M."/>
            <person name="Gerber A.P."/>
            <person name="Zavolan M."/>
            <person name="Aebersold R."/>
            <person name="Hall J."/>
            <person name="Allain F.H."/>
            <person name="Hengartner M.O."/>
        </authorList>
    </citation>
    <scope>STRUCTURE BY NMR OF 254-334</scope>
    <scope>FUNCTION</scope>
    <scope>INTERACTION WITH WAGO-4</scope>
    <scope>SUBCELLULAR LOCATION</scope>
    <scope>TISSUE SPECIFICITY</scope>
    <scope>DOMAIN</scope>
    <scope>DISRUPTION PHENOTYPE</scope>
    <scope>MUTAGENESIS OF 276-ASN-ARG-277</scope>
</reference>
<comment type="function">
    <text evidence="2">RNA-binding protein which binds to its own mRNA and target mRNAs to negatively regulate gene expression to modulate apoptosis and differentiation in the germline (PubMed:30728462). Negatively regulates the expression of the argonaute protein wago-4, and may thus play a role in RNA-mediated gene silencing (RNAi) in the germline (PubMed:30728462).</text>
</comment>
<comment type="subunit">
    <text evidence="2">May interact with wago-4.</text>
</comment>
<comment type="subcellular location">
    <subcellularLocation>
        <location evidence="2">Cytoplasm</location>
        <location evidence="2">Perinuclear region</location>
    </subcellularLocation>
</comment>
<comment type="tissue specificity">
    <text evidence="2">Expressed throughout the germline and in oocytes (at protein level).</text>
</comment>
<comment type="domain">
    <text evidence="2">The KH-like 3 domain is required for binding to RNA.</text>
</comment>
<comment type="disruption phenotype">
    <text evidence="2">RNAi-mediated knockdown results in increased apoptosis and increased sensitivity to DNA damage-induced apoptosis in response to ionizing radiation in the germline.</text>
</comment>
<sequence>MDDSTPYPVPQELYIPQKMKAFMAEPQGCALVAALEGQFQCSIVVINDHLSVISSADGVAVDINQIEKILRDVWRKRDVQIMIREAALNASCTHICHTLLPRAYCAVVLFFSSDLQRRSRCTDIIIDQFTGKVTMFGTEQAVNKAREMMIECLTEHFGLLEMNIPPTQRTTRMGYTNSYNPEIRTHLPPNSFLNSVFPMGEPNAILTSTPPTTSIMDEPLLSASLEKHLLFPSDFSVPPPRLSPVQELPLTPPKTCVVEKIKQWIPTTEVGKILGNRAAVKKHIERQFNCVITVHTEVQSSFGATPVEIVAQNKEQCQEARNAVMSLMQSHQDKPASNPPDSGFSTPGSPFTSDSSSTTPEKRGNSRQYHRGSFRDQPKVMLALTPRKLSPSD</sequence>
<protein>
    <recommendedName>
        <fullName evidence="3">Messenger RNA-binding inhibitor of apoptosis 1</fullName>
    </recommendedName>
</protein>
<dbReference type="EMBL" id="BX284601">
    <property type="protein sequence ID" value="CAB02840.2"/>
    <property type="molecule type" value="Genomic_DNA"/>
</dbReference>
<dbReference type="RefSeq" id="NP_492528.2">
    <property type="nucleotide sequence ID" value="NM_060127.6"/>
</dbReference>
<dbReference type="PDB" id="6FBL">
    <property type="method" value="NMR"/>
    <property type="chains" value="A=254-334"/>
</dbReference>
<dbReference type="PDBsum" id="6FBL"/>
<dbReference type="BMRB" id="Q93367"/>
<dbReference type="SMR" id="Q93367"/>
<dbReference type="FunCoup" id="Q93367">
    <property type="interactions" value="1441"/>
</dbReference>
<dbReference type="STRING" id="6239.C41G7.3.1"/>
<dbReference type="PaxDb" id="6239-C41G7.3"/>
<dbReference type="EnsemblMetazoa" id="C41G7.3.1">
    <property type="protein sequence ID" value="C41G7.3.1"/>
    <property type="gene ID" value="WBGene00008061"/>
</dbReference>
<dbReference type="GeneID" id="172786"/>
<dbReference type="KEGG" id="cel:CELE_C41G7.3"/>
<dbReference type="UCSC" id="C41G7.3">
    <property type="organism name" value="c. elegans"/>
</dbReference>
<dbReference type="AGR" id="WB:WBGene00008061"/>
<dbReference type="CTD" id="172786"/>
<dbReference type="WormBase" id="C41G7.3">
    <property type="protein sequence ID" value="CE42810"/>
    <property type="gene ID" value="WBGene00008061"/>
    <property type="gene designation" value="mina-1"/>
</dbReference>
<dbReference type="eggNOG" id="ENOG502TG75">
    <property type="taxonomic scope" value="Eukaryota"/>
</dbReference>
<dbReference type="HOGENOM" id="CLU_700640_0_0_1"/>
<dbReference type="InParanoid" id="Q93367"/>
<dbReference type="OMA" id="ITVHTEV"/>
<dbReference type="OrthoDB" id="5801278at2759"/>
<dbReference type="PRO" id="PR:Q93367"/>
<dbReference type="Proteomes" id="UP000001940">
    <property type="component" value="Chromosome I"/>
</dbReference>
<dbReference type="Bgee" id="WBGene00008061">
    <property type="expression patterns" value="Expressed in germ line (C elegans) and 3 other cell types or tissues"/>
</dbReference>
<dbReference type="GO" id="GO:0005737">
    <property type="term" value="C:cytoplasm"/>
    <property type="evidence" value="ECO:0000318"/>
    <property type="project" value="GO_Central"/>
</dbReference>
<dbReference type="GO" id="GO:0005634">
    <property type="term" value="C:nucleus"/>
    <property type="evidence" value="ECO:0000318"/>
    <property type="project" value="GO_Central"/>
</dbReference>
<dbReference type="GO" id="GO:0048471">
    <property type="term" value="C:perinuclear region of cytoplasm"/>
    <property type="evidence" value="ECO:0007669"/>
    <property type="project" value="UniProtKB-SubCell"/>
</dbReference>
<dbReference type="GO" id="GO:0003730">
    <property type="term" value="F:mRNA 3'-UTR binding"/>
    <property type="evidence" value="ECO:0000314"/>
    <property type="project" value="UniProtKB"/>
</dbReference>
<dbReference type="GO" id="GO:0003729">
    <property type="term" value="F:mRNA binding"/>
    <property type="evidence" value="ECO:0000318"/>
    <property type="project" value="GO_Central"/>
</dbReference>
<dbReference type="GO" id="GO:0000398">
    <property type="term" value="P:mRNA splicing, via spliceosome"/>
    <property type="evidence" value="ECO:0000318"/>
    <property type="project" value="GO_Central"/>
</dbReference>
<dbReference type="GO" id="GO:0043066">
    <property type="term" value="P:negative regulation of apoptotic process"/>
    <property type="evidence" value="ECO:0000315"/>
    <property type="project" value="UniProtKB"/>
</dbReference>
<dbReference type="GO" id="GO:0045814">
    <property type="term" value="P:negative regulation of gene expression, epigenetic"/>
    <property type="evidence" value="ECO:0000315"/>
    <property type="project" value="UniProtKB"/>
</dbReference>
<dbReference type="GO" id="GO:0000381">
    <property type="term" value="P:regulation of alternative mRNA splicing, via spliceosome"/>
    <property type="evidence" value="ECO:0000318"/>
    <property type="project" value="GO_Central"/>
</dbReference>
<dbReference type="CDD" id="cd00105">
    <property type="entry name" value="KH-I"/>
    <property type="match status" value="1"/>
</dbReference>
<dbReference type="Gene3D" id="3.30.1370.10">
    <property type="entry name" value="K Homology domain, type 1"/>
    <property type="match status" value="1"/>
</dbReference>
<dbReference type="InterPro" id="IPR004087">
    <property type="entry name" value="KH_dom"/>
</dbReference>
<dbReference type="InterPro" id="IPR004088">
    <property type="entry name" value="KH_dom_type_1"/>
</dbReference>
<dbReference type="InterPro" id="IPR036612">
    <property type="entry name" value="KH_dom_type_1_sf"/>
</dbReference>
<dbReference type="Pfam" id="PF00013">
    <property type="entry name" value="KH_1"/>
    <property type="match status" value="1"/>
</dbReference>
<dbReference type="SMART" id="SM00322">
    <property type="entry name" value="KH"/>
    <property type="match status" value="2"/>
</dbReference>
<dbReference type="SUPFAM" id="SSF54791">
    <property type="entry name" value="Eukaryotic type KH-domain (KH-domain type I)"/>
    <property type="match status" value="1"/>
</dbReference>
<name>MINA1_CAEEL</name>
<accession>Q93367</accession>
<keyword id="KW-0002">3D-structure</keyword>
<keyword id="KW-0963">Cytoplasm</keyword>
<keyword id="KW-1185">Reference proteome</keyword>
<keyword id="KW-0694">RNA-binding</keyword>